<proteinExistence type="inferred from homology"/>
<reference key="1">
    <citation type="journal article" date="2003" name="Genome Res.">
        <title>Comparative genome analysis of Vibrio vulnificus, a marine pathogen.</title>
        <authorList>
            <person name="Chen C.-Y."/>
            <person name="Wu K.-M."/>
            <person name="Chang Y.-C."/>
            <person name="Chang C.-H."/>
            <person name="Tsai H.-C."/>
            <person name="Liao T.-L."/>
            <person name="Liu Y.-M."/>
            <person name="Chen H.-J."/>
            <person name="Shen A.B.-T."/>
            <person name="Li J.-C."/>
            <person name="Su T.-L."/>
            <person name="Shao C.-P."/>
            <person name="Lee C.-T."/>
            <person name="Hor L.-I."/>
            <person name="Tsai S.-F."/>
        </authorList>
    </citation>
    <scope>NUCLEOTIDE SEQUENCE [LARGE SCALE GENOMIC DNA]</scope>
    <source>
        <strain>YJ016</strain>
    </source>
</reference>
<keyword id="KW-0001">2Fe-2S</keyword>
<keyword id="KW-0963">Cytoplasm</keyword>
<keyword id="KW-0408">Iron</keyword>
<keyword id="KW-0411">Iron-sulfur</keyword>
<keyword id="KW-0479">Metal-binding</keyword>
<keyword id="KW-0560">Oxidoreductase</keyword>
<dbReference type="EC" id="1.7.99.1" evidence="1"/>
<dbReference type="EMBL" id="BA000037">
    <property type="protein sequence ID" value="BAC94170.1"/>
    <property type="molecule type" value="Genomic_DNA"/>
</dbReference>
<dbReference type="RefSeq" id="WP_011150066.1">
    <property type="nucleotide sequence ID" value="NC_005139.1"/>
</dbReference>
<dbReference type="SMR" id="Q7MLM1"/>
<dbReference type="STRING" id="672.VV93_v1c13190"/>
<dbReference type="KEGG" id="vvy:VV1406"/>
<dbReference type="PATRIC" id="fig|196600.6.peg.1394"/>
<dbReference type="eggNOG" id="COG1151">
    <property type="taxonomic scope" value="Bacteria"/>
</dbReference>
<dbReference type="HOGENOM" id="CLU_038344_2_0_6"/>
<dbReference type="Proteomes" id="UP000002675">
    <property type="component" value="Chromosome I"/>
</dbReference>
<dbReference type="GO" id="GO:0005737">
    <property type="term" value="C:cytoplasm"/>
    <property type="evidence" value="ECO:0007669"/>
    <property type="project" value="UniProtKB-SubCell"/>
</dbReference>
<dbReference type="GO" id="GO:0051537">
    <property type="term" value="F:2 iron, 2 sulfur cluster binding"/>
    <property type="evidence" value="ECO:0007669"/>
    <property type="project" value="UniProtKB-KW"/>
</dbReference>
<dbReference type="GO" id="GO:0050418">
    <property type="term" value="F:hydroxylamine reductase activity"/>
    <property type="evidence" value="ECO:0007669"/>
    <property type="project" value="UniProtKB-UniRule"/>
</dbReference>
<dbReference type="GO" id="GO:0046872">
    <property type="term" value="F:metal ion binding"/>
    <property type="evidence" value="ECO:0007669"/>
    <property type="project" value="UniProtKB-KW"/>
</dbReference>
<dbReference type="GO" id="GO:0004601">
    <property type="term" value="F:peroxidase activity"/>
    <property type="evidence" value="ECO:0007669"/>
    <property type="project" value="TreeGrafter"/>
</dbReference>
<dbReference type="GO" id="GO:0042542">
    <property type="term" value="P:response to hydrogen peroxide"/>
    <property type="evidence" value="ECO:0007669"/>
    <property type="project" value="TreeGrafter"/>
</dbReference>
<dbReference type="CDD" id="cd01914">
    <property type="entry name" value="HCP"/>
    <property type="match status" value="1"/>
</dbReference>
<dbReference type="FunFam" id="1.20.1270.20:FF:000001">
    <property type="entry name" value="Hydroxylamine reductase"/>
    <property type="match status" value="1"/>
</dbReference>
<dbReference type="FunFam" id="1.20.1270.20:FF:000002">
    <property type="entry name" value="Hydroxylamine reductase"/>
    <property type="match status" value="1"/>
</dbReference>
<dbReference type="FunFam" id="3.40.50.2030:FF:000001">
    <property type="entry name" value="Hydroxylamine reductase"/>
    <property type="match status" value="1"/>
</dbReference>
<dbReference type="FunFam" id="3.40.50.2030:FF:000002">
    <property type="entry name" value="Hydroxylamine reductase"/>
    <property type="match status" value="1"/>
</dbReference>
<dbReference type="Gene3D" id="1.20.1270.20">
    <property type="match status" value="2"/>
</dbReference>
<dbReference type="Gene3D" id="3.40.50.2030">
    <property type="match status" value="2"/>
</dbReference>
<dbReference type="HAMAP" id="MF_00069">
    <property type="entry name" value="Hydroxylam_reduct"/>
    <property type="match status" value="1"/>
</dbReference>
<dbReference type="InterPro" id="IPR004137">
    <property type="entry name" value="HCP/CODH"/>
</dbReference>
<dbReference type="InterPro" id="IPR010048">
    <property type="entry name" value="Hydroxylam_reduct"/>
</dbReference>
<dbReference type="InterPro" id="IPR016099">
    <property type="entry name" value="Prismane-like_a/b-sand"/>
</dbReference>
<dbReference type="InterPro" id="IPR011254">
    <property type="entry name" value="Prismane-like_sf"/>
</dbReference>
<dbReference type="InterPro" id="IPR016100">
    <property type="entry name" value="Prismane_a-bundle"/>
</dbReference>
<dbReference type="NCBIfam" id="TIGR01703">
    <property type="entry name" value="hybrid_clust"/>
    <property type="match status" value="1"/>
</dbReference>
<dbReference type="NCBIfam" id="NF003658">
    <property type="entry name" value="PRK05290.1"/>
    <property type="match status" value="1"/>
</dbReference>
<dbReference type="PANTHER" id="PTHR30109">
    <property type="entry name" value="HYDROXYLAMINE REDUCTASE"/>
    <property type="match status" value="1"/>
</dbReference>
<dbReference type="PANTHER" id="PTHR30109:SF0">
    <property type="entry name" value="HYDROXYLAMINE REDUCTASE"/>
    <property type="match status" value="1"/>
</dbReference>
<dbReference type="Pfam" id="PF03063">
    <property type="entry name" value="Prismane"/>
    <property type="match status" value="1"/>
</dbReference>
<dbReference type="PIRSF" id="PIRSF000076">
    <property type="entry name" value="HCP"/>
    <property type="match status" value="1"/>
</dbReference>
<dbReference type="SUPFAM" id="SSF56821">
    <property type="entry name" value="Prismane protein-like"/>
    <property type="match status" value="1"/>
</dbReference>
<evidence type="ECO:0000255" key="1">
    <source>
        <dbReference type="HAMAP-Rule" id="MF_00069"/>
    </source>
</evidence>
<protein>
    <recommendedName>
        <fullName evidence="1">Hydroxylamine reductase</fullName>
        <ecNumber evidence="1">1.7.99.1</ecNumber>
    </recommendedName>
    <alternativeName>
        <fullName evidence="1">Hybrid-cluster protein</fullName>
        <shortName evidence="1">HCP</shortName>
    </alternativeName>
    <alternativeName>
        <fullName evidence="1">Prismane protein</fullName>
    </alternativeName>
</protein>
<name>HCP_VIBVY</name>
<comment type="function">
    <text evidence="1">Catalyzes the reduction of hydroxylamine to form NH(3) and H(2)O.</text>
</comment>
<comment type="catalytic activity">
    <reaction evidence="1">
        <text>A + NH4(+) + H2O = hydroxylamine + AH2 + H(+)</text>
        <dbReference type="Rhea" id="RHEA:22052"/>
        <dbReference type="ChEBI" id="CHEBI:13193"/>
        <dbReference type="ChEBI" id="CHEBI:15377"/>
        <dbReference type="ChEBI" id="CHEBI:15378"/>
        <dbReference type="ChEBI" id="CHEBI:15429"/>
        <dbReference type="ChEBI" id="CHEBI:17499"/>
        <dbReference type="ChEBI" id="CHEBI:28938"/>
        <dbReference type="EC" id="1.7.99.1"/>
    </reaction>
</comment>
<comment type="cofactor">
    <cofactor evidence="1">
        <name>[2Fe-2S] cluster</name>
        <dbReference type="ChEBI" id="CHEBI:190135"/>
    </cofactor>
    <text evidence="1">Binds 1 [2Fe-2S] cluster.</text>
</comment>
<comment type="cofactor">
    <cofactor evidence="1">
        <name>hybrid [4Fe-2O-2S] cluster</name>
        <dbReference type="ChEBI" id="CHEBI:60519"/>
    </cofactor>
    <text evidence="1">Binds 1 hybrid [4Fe-2O-2S] cluster.</text>
</comment>
<comment type="subcellular location">
    <subcellularLocation>
        <location evidence="1">Cytoplasm</location>
    </subcellularLocation>
</comment>
<comment type="similarity">
    <text evidence="1">Belongs to the HCP family.</text>
</comment>
<gene>
    <name evidence="1" type="primary">hcp</name>
    <name type="ordered locus">VV1406</name>
</gene>
<accession>Q7MLM1</accession>
<feature type="chain" id="PRO_0000151689" description="Hydroxylamine reductase">
    <location>
        <begin position="1"/>
        <end position="553"/>
    </location>
</feature>
<feature type="binding site" evidence="1">
    <location>
        <position position="3"/>
    </location>
    <ligand>
        <name>[2Fe-2S] cluster</name>
        <dbReference type="ChEBI" id="CHEBI:190135"/>
    </ligand>
</feature>
<feature type="binding site" evidence="1">
    <location>
        <position position="6"/>
    </location>
    <ligand>
        <name>[2Fe-2S] cluster</name>
        <dbReference type="ChEBI" id="CHEBI:190135"/>
    </ligand>
</feature>
<feature type="binding site" evidence="1">
    <location>
        <position position="18"/>
    </location>
    <ligand>
        <name>[2Fe-2S] cluster</name>
        <dbReference type="ChEBI" id="CHEBI:190135"/>
    </ligand>
</feature>
<feature type="binding site" evidence="1">
    <location>
        <position position="25"/>
    </location>
    <ligand>
        <name>[2Fe-2S] cluster</name>
        <dbReference type="ChEBI" id="CHEBI:190135"/>
    </ligand>
</feature>
<feature type="binding site" evidence="1">
    <location>
        <position position="252"/>
    </location>
    <ligand>
        <name>hybrid [4Fe-2O-2S] cluster</name>
        <dbReference type="ChEBI" id="CHEBI:60519"/>
    </ligand>
</feature>
<feature type="binding site" evidence="1">
    <location>
        <position position="276"/>
    </location>
    <ligand>
        <name>hybrid [4Fe-2O-2S] cluster</name>
        <dbReference type="ChEBI" id="CHEBI:60519"/>
    </ligand>
</feature>
<feature type="binding site" evidence="1">
    <location>
        <position position="320"/>
    </location>
    <ligand>
        <name>hybrid [4Fe-2O-2S] cluster</name>
        <dbReference type="ChEBI" id="CHEBI:60519"/>
    </ligand>
</feature>
<feature type="binding site" description="via persulfide group" evidence="1">
    <location>
        <position position="408"/>
    </location>
    <ligand>
        <name>hybrid [4Fe-2O-2S] cluster</name>
        <dbReference type="ChEBI" id="CHEBI:60519"/>
    </ligand>
</feature>
<feature type="binding site" evidence="1">
    <location>
        <position position="436"/>
    </location>
    <ligand>
        <name>hybrid [4Fe-2O-2S] cluster</name>
        <dbReference type="ChEBI" id="CHEBI:60519"/>
    </ligand>
</feature>
<feature type="binding site" evidence="1">
    <location>
        <position position="461"/>
    </location>
    <ligand>
        <name>hybrid [4Fe-2O-2S] cluster</name>
        <dbReference type="ChEBI" id="CHEBI:60519"/>
    </ligand>
</feature>
<feature type="binding site" evidence="1">
    <location>
        <position position="495"/>
    </location>
    <ligand>
        <name>hybrid [4Fe-2O-2S] cluster</name>
        <dbReference type="ChEBI" id="CHEBI:60519"/>
    </ligand>
</feature>
<feature type="binding site" evidence="1">
    <location>
        <position position="497"/>
    </location>
    <ligand>
        <name>hybrid [4Fe-2O-2S] cluster</name>
        <dbReference type="ChEBI" id="CHEBI:60519"/>
    </ligand>
</feature>
<feature type="modified residue" description="Cysteine persulfide" evidence="1">
    <location>
        <position position="408"/>
    </location>
</feature>
<sequence length="553" mass="60604">MFCIQCEQTIQTPAVKGCSFAQGMCGKTAEVSDLQDVLVYSLQGVSYWATQAHRYGIINDEINQWAPKAFFSTLTNVNFDPERILQLTSQAAQFKAQLKDQVLTASSLANSPLSEVPAVAEFELPENAQAILAFAPQVAVNRGKESVHEDVIGLRLLCLYGLKGAAAYMEHARVLEQTSNDIYAEYHEIMAWLGTDPEDLGELLDCSMRIGLMNYKVMEMLDHGETATFGHPVPTAVNVKPVKGKCILVSGHDLHDLEKILQQTEGKGINVYTNGEMLPAHGYPELNKYPHLVGNYGSAWQNQQKEFANFPGAIVMTSNCLLNPNVGQYADRLFTRSIVGWPGVAHIEGDDFSAVIESALAQPGFQHDEIEHMITVGFGRNALMNAAPAVIDQVKQGNIKHFFLVGGCDGDKAERSYYTDFTEAAPEDTLILTLACGKFRFNKNTFGDINGIPRLLDVGQCNDAYSAIQLALALAQEFDCGINELPLTLVLSWFEQKAIVILLTLFALGVKGIYTGPTAPAFLTPNLIAIIQEKFDMRSIGNVQDDLNTILAA</sequence>
<organism>
    <name type="scientific">Vibrio vulnificus (strain YJ016)</name>
    <dbReference type="NCBI Taxonomy" id="196600"/>
    <lineage>
        <taxon>Bacteria</taxon>
        <taxon>Pseudomonadati</taxon>
        <taxon>Pseudomonadota</taxon>
        <taxon>Gammaproteobacteria</taxon>
        <taxon>Vibrionales</taxon>
        <taxon>Vibrionaceae</taxon>
        <taxon>Vibrio</taxon>
    </lineage>
</organism>